<reference evidence="8" key="1">
    <citation type="journal article" date="2012" name="PLoS Negl. Trop. Dis.">
        <title>A systematically improved high quality genome and transcriptome of the human blood fluke Schistosoma mansoni.</title>
        <authorList>
            <person name="Protasio A.V."/>
            <person name="Tsai I.J."/>
            <person name="Babbage A."/>
            <person name="Nichol S."/>
            <person name="Hunt M."/>
            <person name="Aslett M.A."/>
            <person name="De Silva N."/>
            <person name="Velarde G.S."/>
            <person name="Anderson T.J."/>
            <person name="Clark R.C."/>
            <person name="Davidson C."/>
            <person name="Dillon G.P."/>
            <person name="Holroyd N.E."/>
            <person name="LoVerde P.T."/>
            <person name="Lloyd C."/>
            <person name="McQuillan J."/>
            <person name="Oliveira G."/>
            <person name="Otto T.D."/>
            <person name="Parker-Manuel S.J."/>
            <person name="Quail M.A."/>
            <person name="Wilson R.A."/>
            <person name="Zerlotini A."/>
            <person name="Dunne D.W."/>
            <person name="Berriman M."/>
        </authorList>
    </citation>
    <scope>NUCLEOTIDE SEQUENCE [LARGE SCALE GENOMIC DNA]</scope>
    <source>
        <strain evidence="8">Puerto Rican</strain>
    </source>
</reference>
<reference evidence="10" key="2">
    <citation type="journal article" date="2021" name="Int. J. Biol. Macromol.">
        <title>Characterization of class II fumarase from Schistosoma mansoni provides the molecular basis for selective inhibition.</title>
        <authorList>
            <person name="Cardoso I.A."/>
            <person name="de Souza A.K.L."/>
            <person name="Burgess A.M.G."/>
            <person name="Chalmers I.W."/>
            <person name="Hoffmann K.F."/>
            <person name="Nonato M.C."/>
        </authorList>
    </citation>
    <scope>X-RAY CRYSTALLOGRAPHY (1.85 ANGSTROMS) IN COMPLEX WITH (S)-MALATE</scope>
    <scope>FUNCTION</scope>
    <scope>CATALYTIC ACTIVITY</scope>
    <scope>BIOPHYSICOCHEMICAL PROPERTIES</scope>
    <scope>SUBUNIT</scope>
    <scope>BIOTECHNOLOGY</scope>
    <scope>MUTAGENESIS OF 263-ARG--ASP-277</scope>
    <source>
        <strain evidence="5">Puerto Rican</strain>
    </source>
</reference>
<evidence type="ECO:0000250" key="1">
    <source>
        <dbReference type="UniProtKB" id="P05042"/>
    </source>
</evidence>
<evidence type="ECO:0000250" key="2">
    <source>
        <dbReference type="UniProtKB" id="P07954"/>
    </source>
</evidence>
<evidence type="ECO:0000250" key="3">
    <source>
        <dbReference type="UniProtKB" id="P9WN93"/>
    </source>
</evidence>
<evidence type="ECO:0000269" key="4">
    <source>
    </source>
</evidence>
<evidence type="ECO:0000303" key="5">
    <source>
    </source>
</evidence>
<evidence type="ECO:0000305" key="6"/>
<evidence type="ECO:0000305" key="7">
    <source>
    </source>
</evidence>
<evidence type="ECO:0000312" key="8">
    <source>
        <dbReference type="Proteomes" id="UP000008854"/>
    </source>
</evidence>
<evidence type="ECO:0000312" key="9">
    <source>
        <dbReference type="WBParaSite" id="Smp_158240.1"/>
    </source>
</evidence>
<evidence type="ECO:0007744" key="10">
    <source>
        <dbReference type="PDB" id="6U4O"/>
    </source>
</evidence>
<evidence type="ECO:0007829" key="11">
    <source>
        <dbReference type="PDB" id="6U4O"/>
    </source>
</evidence>
<sequence>MLETDSQRLRVVEDSLGKINVPLERYYGAQTARSLGNFNVCTRSDTMPLQIVYSLAMIKEVAACTNFKLGRISSKLSDAIVKACREVYHGQHDNEFPLVIWQTGSGTQTNMNVNEVLSSRASELIDGSRSSRLTVHPNDHVNLGQSSNDIFPTAMNLSIAMETAWKVLPSLNHLINVLKIKMHEFMNVIKIGRTHMQDAVPMSVGQELSGYVSQLQQAVDSIKSQLPLICHLAVGGTAVGTGLNCSKGFDEELCVSLTQLTDRLYRTMYKESTPVVDLIFKPAENKFAALAGHDALLQLSGCFNTTATALMRLSNDFCLLSSGPNCGLSEFVLPANEPGSSIMPGKVNPTQCESLRMVCLQIMGNHFTTSMAASQGQLELNVCKPLIAANLLHTCELLTDSTRCFADKCVRDLQLNREKIQEYVDKSLMLVTVLTPHIGYDLSAKLVQHASKFKKGLRESAIELNLLCGEKFDEIVKPMEMAFPHNNK</sequence>
<keyword id="KW-0002">3D-structure</keyword>
<keyword id="KW-0963">Cytoplasm</keyword>
<keyword id="KW-0456">Lyase</keyword>
<keyword id="KW-1185">Reference proteome</keyword>
<feature type="chain" id="PRO_0000461106" description="Fumarate hydratase">
    <location>
        <begin position="1"/>
        <end position="488"/>
    </location>
</feature>
<feature type="active site" description="Proton donor/acceptor" evidence="1">
    <location>
        <position position="195"/>
    </location>
</feature>
<feature type="active site" evidence="3">
    <location>
        <position position="340"/>
    </location>
</feature>
<feature type="binding site" evidence="4 10">
    <location>
        <position position="105"/>
    </location>
    <ligand>
        <name>(S)-malate</name>
        <dbReference type="ChEBI" id="CHEBI:15589"/>
    </ligand>
</feature>
<feature type="binding site" evidence="4 10">
    <location>
        <position position="147"/>
    </location>
    <ligand>
        <name>(S)-malate</name>
        <dbReference type="ChEBI" id="CHEBI:15589"/>
    </ligand>
</feature>
<feature type="binding site" evidence="4 10">
    <location>
        <position position="148"/>
    </location>
    <ligand>
        <name>(S)-malate</name>
        <dbReference type="ChEBI" id="CHEBI:15589"/>
    </ligand>
</feature>
<feature type="binding site" evidence="4 10">
    <location>
        <position position="194"/>
    </location>
    <ligand>
        <name>(S)-malate</name>
        <dbReference type="ChEBI" id="CHEBI:15589"/>
    </ligand>
</feature>
<feature type="binding site" evidence="4 10">
    <location>
        <position position="195"/>
    </location>
    <ligand>
        <name>(S)-malate</name>
        <dbReference type="ChEBI" id="CHEBI:15589"/>
    </ligand>
</feature>
<feature type="binding site" evidence="4 10">
    <location>
        <position position="341"/>
    </location>
    <ligand>
        <name>(S)-malate</name>
        <dbReference type="ChEBI" id="CHEBI:15589"/>
    </ligand>
</feature>
<feature type="binding site" evidence="4 10">
    <location>
        <position position="346"/>
    </location>
    <ligand>
        <name>(S)-malate</name>
        <dbReference type="ChEBI" id="CHEBI:15589"/>
    </ligand>
</feature>
<feature type="binding site" evidence="4 10">
    <location>
        <position position="348"/>
    </location>
    <ligand>
        <name>(S)-malate</name>
        <dbReference type="ChEBI" id="CHEBI:15589"/>
    </ligand>
</feature>
<feature type="site" description="Important for catalytic activity" evidence="1">
    <location>
        <position position="353"/>
    </location>
</feature>
<feature type="mutagenesis site" description="Remains as a tetramer. 17.35 degrees Celsius lower melting temperature (Tm) than wild-type with the highest thermal stability around pH 6.5. Similarly to wild-type, thermal stability increases with increasing NaCl concentration, in addition, acetate induces a positive thermoshift. No change in optimum pH. No effect in catalytic constants other than subtle differences for L-malate constants." evidence="4">
    <location>
        <begin position="263"/>
        <end position="277"/>
    </location>
</feature>
<feature type="strand" evidence="11">
    <location>
        <begin position="10"/>
        <end position="14"/>
    </location>
</feature>
<feature type="strand" evidence="11">
    <location>
        <begin position="17"/>
        <end position="21"/>
    </location>
</feature>
<feature type="helix" evidence="11">
    <location>
        <begin position="29"/>
        <end position="37"/>
    </location>
</feature>
<feature type="turn" evidence="11">
    <location>
        <begin position="42"/>
        <end position="44"/>
    </location>
</feature>
<feature type="helix" evidence="11">
    <location>
        <begin position="49"/>
        <end position="68"/>
    </location>
</feature>
<feature type="helix" evidence="11">
    <location>
        <begin position="74"/>
        <end position="88"/>
    </location>
</feature>
<feature type="helix" evidence="11">
    <location>
        <begin position="93"/>
        <end position="95"/>
    </location>
</feature>
<feature type="strand" evidence="11">
    <location>
        <begin position="99"/>
        <end position="102"/>
    </location>
</feature>
<feature type="helix" evidence="11">
    <location>
        <begin position="107"/>
        <end position="126"/>
    </location>
</feature>
<feature type="helix" evidence="11">
    <location>
        <begin position="137"/>
        <end position="141"/>
    </location>
</feature>
<feature type="turn" evidence="11">
    <location>
        <begin position="142"/>
        <end position="144"/>
    </location>
</feature>
<feature type="helix" evidence="11">
    <location>
        <begin position="147"/>
        <end position="165"/>
    </location>
</feature>
<feature type="helix" evidence="11">
    <location>
        <begin position="167"/>
        <end position="184"/>
    </location>
</feature>
<feature type="turn" evidence="11">
    <location>
        <begin position="185"/>
        <end position="187"/>
    </location>
</feature>
<feature type="strand" evidence="11">
    <location>
        <begin position="189"/>
        <end position="194"/>
    </location>
</feature>
<feature type="strand" evidence="11">
    <location>
        <begin position="197"/>
        <end position="203"/>
    </location>
</feature>
<feature type="helix" evidence="11">
    <location>
        <begin position="204"/>
        <end position="229"/>
    </location>
</feature>
<feature type="turn" evidence="11">
    <location>
        <begin position="237"/>
        <end position="239"/>
    </location>
</feature>
<feature type="helix" evidence="11">
    <location>
        <begin position="249"/>
        <end position="268"/>
    </location>
</feature>
<feature type="helix" evidence="11">
    <location>
        <begin position="286"/>
        <end position="291"/>
    </location>
</feature>
<feature type="helix" evidence="11">
    <location>
        <begin position="294"/>
        <end position="320"/>
    </location>
</feature>
<feature type="strand" evidence="11">
    <location>
        <begin position="324"/>
        <end position="327"/>
    </location>
</feature>
<feature type="strand" evidence="11">
    <location>
        <begin position="341"/>
        <end position="343"/>
    </location>
</feature>
<feature type="helix" evidence="11">
    <location>
        <begin position="350"/>
        <end position="373"/>
    </location>
</feature>
<feature type="helix" evidence="11">
    <location>
        <begin position="384"/>
        <end position="408"/>
    </location>
</feature>
<feature type="turn" evidence="11">
    <location>
        <begin position="409"/>
        <end position="412"/>
    </location>
</feature>
<feature type="helix" evidence="11">
    <location>
        <begin position="417"/>
        <end position="426"/>
    </location>
</feature>
<feature type="helix" evidence="11">
    <location>
        <begin position="428"/>
        <end position="434"/>
    </location>
</feature>
<feature type="helix" evidence="11">
    <location>
        <begin position="435"/>
        <end position="438"/>
    </location>
</feature>
<feature type="helix" evidence="11">
    <location>
        <begin position="440"/>
        <end position="452"/>
    </location>
</feature>
<feature type="helix" evidence="11">
    <location>
        <begin position="457"/>
        <end position="463"/>
    </location>
</feature>
<feature type="helix" evidence="11">
    <location>
        <begin position="469"/>
        <end position="475"/>
    </location>
</feature>
<feature type="helix" evidence="11">
    <location>
        <begin position="478"/>
        <end position="482"/>
    </location>
</feature>
<name>FUMC_SCHMA</name>
<protein>
    <recommendedName>
        <fullName evidence="5">Fumarate hydratase</fullName>
        <shortName evidence="5">Fumarase</shortName>
        <ecNumber evidence="4">4.2.1.2</ecNumber>
    </recommendedName>
    <alternativeName>
        <fullName evidence="5">Class II fumarase</fullName>
    </alternativeName>
    <alternativeName>
        <fullName evidence="5">SmFHII</fullName>
    </alternativeName>
</protein>
<comment type="function">
    <text evidence="2 4">Catalyzes the reversible stereospecific interconversion of fumarate to L-malate (PubMed:33549669). Fumarate metabolism in the cytosol plays a role during urea cycle and arginine metabolism; fumarate being a by-product of the urea cycle and amino-acid catabolism (By similarity).</text>
</comment>
<comment type="catalytic activity">
    <reaction evidence="4">
        <text>(S)-malate = fumarate + H2O</text>
        <dbReference type="Rhea" id="RHEA:12460"/>
        <dbReference type="ChEBI" id="CHEBI:15377"/>
        <dbReference type="ChEBI" id="CHEBI:15589"/>
        <dbReference type="ChEBI" id="CHEBI:29806"/>
        <dbReference type="EC" id="4.2.1.2"/>
    </reaction>
</comment>
<comment type="biophysicochemical properties">
    <kinetics>
        <KM evidence="4">0.56 mM for L-malate (at pH 7.5 and in the presence of 150 mM KCl)</KM>
        <KM evidence="4">0.15 mM for fumarate (at pH 7.5 and in the presence of 150 mM KCl)</KM>
        <text evidence="4">kcat is 19 sec(-1) for the conversion of L-malate into fumarate (at pH 7.5 and in the presence of 150 mM KCl). kcat is 49 sec(-1) for the conversion of fumarate into L-malate (at pH 7.5 and in the presence of 150 mM KCl).</text>
    </kinetics>
    <phDependence>
        <text evidence="4">Optimum pH is around 7-7.5 for fumarate and around pH 8 for L-malate.</text>
    </phDependence>
    <temperatureDependence>
        <text evidence="4">Has a melting temperature (Tm) of 49.08 degrees Celsius with the highest thermal stability around pH 7.5. Thermal stability increases with increasing NaCl concentration. Both sodium acetate buffer and glycerol promote thermal stabilization.</text>
    </temperatureDependence>
</comment>
<comment type="subunit">
    <text evidence="4">Homotetramer.</text>
</comment>
<comment type="subcellular location">
    <subcellularLocation>
        <location evidence="2">Cytoplasm</location>
        <location evidence="2">Cytosol</location>
    </subcellularLocation>
</comment>
<comment type="biotechnology">
    <text evidence="7">May be a potential drug target. Inhibiting the activity of this protein may be exploited to treat schistosomiasis.</text>
</comment>
<comment type="miscellaneous">
    <text evidence="1">There are 2 substrate-binding sites: the catalytic A site, and the non-catalytic B site that may play a role in the transfer of substrate or product between the active site and the solvent. Alternatively, the B site may bind allosteric effectors.</text>
</comment>
<comment type="similarity">
    <text evidence="6">Belongs to the class-II fumarase/aspartase family. Fumarase subfamily.</text>
</comment>
<comment type="sequence caution" evidence="6">
    <conflict type="erroneous gene model prediction">
        <sequence resource="EMBL-CDS" id="CCD58904"/>
    </conflict>
</comment>
<dbReference type="EC" id="4.2.1.2" evidence="4"/>
<dbReference type="EMBL" id="CABG01000014">
    <property type="protein sequence ID" value="CCD58904.1"/>
    <property type="status" value="ALT_SEQ"/>
    <property type="molecule type" value="Genomic_DNA"/>
</dbReference>
<dbReference type="PDB" id="6U4O">
    <property type="method" value="X-ray"/>
    <property type="resolution" value="1.85 A"/>
    <property type="chains" value="A/B/C/D=1-488"/>
</dbReference>
<dbReference type="PDBsum" id="6U4O"/>
<dbReference type="SMR" id="A0A3Q0KQY7"/>
<dbReference type="STRING" id="6183.A0A3Q0KQY7"/>
<dbReference type="EnsemblMetazoa" id="Smp_158240.1">
    <property type="protein sequence ID" value="Smp_158240.1"/>
    <property type="gene ID" value="Smp_158240"/>
</dbReference>
<dbReference type="EnsemblMetazoa" id="Smp_158240.2">
    <property type="protein sequence ID" value="Smp_158240.2"/>
    <property type="gene ID" value="Smp_158240"/>
</dbReference>
<dbReference type="WBParaSite" id="Smp_158240.1">
    <property type="protein sequence ID" value="Smp_158240.1"/>
    <property type="gene ID" value="Smp_158240"/>
</dbReference>
<dbReference type="InParanoid" id="A0A3Q0KQY7"/>
<dbReference type="Proteomes" id="UP000008854">
    <property type="component" value="Unassembled WGS sequence"/>
</dbReference>
<dbReference type="ExpressionAtlas" id="A0A3Q0KQY7">
    <property type="expression patterns" value="baseline and differential"/>
</dbReference>
<dbReference type="GO" id="GO:0005829">
    <property type="term" value="C:cytosol"/>
    <property type="evidence" value="ECO:0000250"/>
    <property type="project" value="UniProtKB"/>
</dbReference>
<dbReference type="GO" id="GO:0005739">
    <property type="term" value="C:mitochondrion"/>
    <property type="evidence" value="ECO:0007669"/>
    <property type="project" value="TreeGrafter"/>
</dbReference>
<dbReference type="GO" id="GO:0004333">
    <property type="term" value="F:fumarate hydratase activity"/>
    <property type="evidence" value="ECO:0000314"/>
    <property type="project" value="UniProtKB"/>
</dbReference>
<dbReference type="GO" id="GO:0006525">
    <property type="term" value="P:arginine metabolic process"/>
    <property type="evidence" value="ECO:0000250"/>
    <property type="project" value="UniProtKB"/>
</dbReference>
<dbReference type="GO" id="GO:0006106">
    <property type="term" value="P:fumarate metabolic process"/>
    <property type="evidence" value="ECO:0000314"/>
    <property type="project" value="UniProtKB"/>
</dbReference>
<dbReference type="GO" id="GO:0006108">
    <property type="term" value="P:malate metabolic process"/>
    <property type="evidence" value="ECO:0000314"/>
    <property type="project" value="UniProtKB"/>
</dbReference>
<dbReference type="GO" id="GO:0051289">
    <property type="term" value="P:protein homotetramerization"/>
    <property type="evidence" value="ECO:0000314"/>
    <property type="project" value="UniProtKB"/>
</dbReference>
<dbReference type="GO" id="GO:0006099">
    <property type="term" value="P:tricarboxylic acid cycle"/>
    <property type="evidence" value="ECO:0007669"/>
    <property type="project" value="UniProtKB-UniPathway"/>
</dbReference>
<dbReference type="GO" id="GO:0000050">
    <property type="term" value="P:urea cycle"/>
    <property type="evidence" value="ECO:0000250"/>
    <property type="project" value="UniProtKB"/>
</dbReference>
<dbReference type="FunFam" id="1.10.40.30:FF:000002">
    <property type="entry name" value="Fumarate hydratase class II"/>
    <property type="match status" value="1"/>
</dbReference>
<dbReference type="FunFam" id="1.10.275.10:FF:000001">
    <property type="entry name" value="Fumarate hydratase, mitochondrial"/>
    <property type="match status" value="1"/>
</dbReference>
<dbReference type="FunFam" id="1.20.200.10:FF:000001">
    <property type="entry name" value="Fumarate hydratase, mitochondrial"/>
    <property type="match status" value="1"/>
</dbReference>
<dbReference type="Gene3D" id="1.10.40.30">
    <property type="entry name" value="Fumarase/aspartase (C-terminal domain)"/>
    <property type="match status" value="1"/>
</dbReference>
<dbReference type="Gene3D" id="1.20.200.10">
    <property type="entry name" value="Fumarase/aspartase (Central domain)"/>
    <property type="match status" value="1"/>
</dbReference>
<dbReference type="Gene3D" id="1.10.275.10">
    <property type="entry name" value="Fumarase/aspartase (N-terminal domain)"/>
    <property type="match status" value="1"/>
</dbReference>
<dbReference type="HAMAP" id="MF_00743">
    <property type="entry name" value="FumaraseC"/>
    <property type="match status" value="1"/>
</dbReference>
<dbReference type="InterPro" id="IPR005677">
    <property type="entry name" value="Fum_hydII"/>
</dbReference>
<dbReference type="InterPro" id="IPR024083">
    <property type="entry name" value="Fumarase/histidase_N"/>
</dbReference>
<dbReference type="InterPro" id="IPR018951">
    <property type="entry name" value="Fumarase_C_C"/>
</dbReference>
<dbReference type="InterPro" id="IPR020557">
    <property type="entry name" value="Fumarate_lyase_CS"/>
</dbReference>
<dbReference type="InterPro" id="IPR000362">
    <property type="entry name" value="Fumarate_lyase_fam"/>
</dbReference>
<dbReference type="InterPro" id="IPR022761">
    <property type="entry name" value="Fumarate_lyase_N"/>
</dbReference>
<dbReference type="InterPro" id="IPR008948">
    <property type="entry name" value="L-Aspartase-like"/>
</dbReference>
<dbReference type="PANTHER" id="PTHR11444">
    <property type="entry name" value="ASPARTATEAMMONIA/ARGININOSUCCINATE/ADENYLOSUCCINATE LYASE"/>
    <property type="match status" value="1"/>
</dbReference>
<dbReference type="PANTHER" id="PTHR11444:SF1">
    <property type="entry name" value="FUMARATE HYDRATASE, MITOCHONDRIAL"/>
    <property type="match status" value="1"/>
</dbReference>
<dbReference type="Pfam" id="PF10415">
    <property type="entry name" value="FumaraseC_C"/>
    <property type="match status" value="1"/>
</dbReference>
<dbReference type="Pfam" id="PF00206">
    <property type="entry name" value="Lyase_1"/>
    <property type="match status" value="1"/>
</dbReference>
<dbReference type="PRINTS" id="PR00145">
    <property type="entry name" value="ARGSUCLYASE"/>
</dbReference>
<dbReference type="PRINTS" id="PR00149">
    <property type="entry name" value="FUMRATELYASE"/>
</dbReference>
<dbReference type="SUPFAM" id="SSF48557">
    <property type="entry name" value="L-aspartase-like"/>
    <property type="match status" value="1"/>
</dbReference>
<dbReference type="PROSITE" id="PS00163">
    <property type="entry name" value="FUMARATE_LYASES"/>
    <property type="match status" value="1"/>
</dbReference>
<organism evidence="8 9">
    <name type="scientific">Schistosoma mansoni</name>
    <name type="common">Blood fluke</name>
    <dbReference type="NCBI Taxonomy" id="6183"/>
    <lineage>
        <taxon>Eukaryota</taxon>
        <taxon>Metazoa</taxon>
        <taxon>Spiralia</taxon>
        <taxon>Lophotrochozoa</taxon>
        <taxon>Platyhelminthes</taxon>
        <taxon>Trematoda</taxon>
        <taxon>Digenea</taxon>
        <taxon>Strigeidida</taxon>
        <taxon>Schistosomatoidea</taxon>
        <taxon>Schistosomatidae</taxon>
        <taxon>Schistosoma</taxon>
    </lineage>
</organism>
<proteinExistence type="evidence at protein level"/>
<gene>
    <name evidence="5" type="ORF">Smp_158240</name>
</gene>
<accession>A0A3Q0KQY7</accession>
<accession>A0A5K4ESW0</accession>